<keyword id="KW-0025">Alternative splicing</keyword>
<keyword id="KW-0663">Pyridoxal phosphate</keyword>
<keyword id="KW-1185">Reference proteome</keyword>
<gene>
    <name type="primary">Accs</name>
</gene>
<proteinExistence type="evidence at transcript level"/>
<feature type="chain" id="PRO_0000318072" description="1-aminocyclopropane-1-carboxylate synthase-like protein 1">
    <location>
        <begin position="1"/>
        <end position="502"/>
    </location>
</feature>
<feature type="region of interest" description="Disordered" evidence="4">
    <location>
        <begin position="1"/>
        <end position="24"/>
    </location>
</feature>
<feature type="binding site" evidence="1">
    <location>
        <position position="106"/>
    </location>
    <ligand>
        <name>substrate</name>
    </ligand>
</feature>
<feature type="modified residue" description="N6-(pyridoxal phosphate)lysine" evidence="1">
    <location>
        <position position="324"/>
    </location>
</feature>
<feature type="splice variant" id="VSP_052669" description="In isoform 2." evidence="6">
    <location>
        <begin position="1"/>
        <end position="23"/>
    </location>
</feature>
<sequence length="502" mass="56879">MFCLPQQESTAPTTCTGSASTQDMDSGYGDGLQGECLRKPDQTQPKLYGVGDPTATFSSDSSCLSSRGRVIKWFWDSAEEGYRTYHMDEYDEDKNPSGIINLGTSENKLCFDLLSWRLTQGDMLHVEPSLLQYPDWRGHLFLREEVAKFLSFYCKSPAPLKPENVVVLNGCASLFSALATVLCEAGEALLIPTPYYGAITQHIYLYGNVRLAYVYLDSKVTGLNTRPFQLTVEKLEMVLQGVSSEGVKVKGLILINPQNPLGDVYSPEELQDFLRFAMRHKLHVIMDEVYMLSVFEESLGYRSVLSLERLPDPQRTHVMWATSKDFGMSGLRFGVLYTENQHVATAVASLCRYHGLSGLVQHQMAQLLRDHDWISQVYLPENHARLKAAHTYVSEELRALGIPFVSRGAGFFIWVDLRKYLCKGTFEEEALLWRQFLDNKVLLSSGKTFECKEPGWFRVVFSDKENRLRLGMQRMRQVLEGQSQVVEDASPCHAQEPQSQPR</sequence>
<comment type="function">
    <text evidence="2">Does not catalyze the synthesis of 1-aminocyclopropane-1-carboxylate but is capable of catalyzing the deamination of L-vinylglycine.</text>
</comment>
<comment type="alternative products">
    <event type="alternative splicing"/>
    <isoform>
        <id>A2AIG8-1</id>
        <name>1</name>
        <sequence type="displayed"/>
    </isoform>
    <isoform>
        <id>A2AIG8-2</id>
        <name evidence="5">2</name>
        <sequence type="described" ref="VSP_052669"/>
    </isoform>
</comment>
<comment type="similarity">
    <text evidence="3">Belongs to the class-I pyridoxal-phosphate-dependent aminotransferase family.</text>
</comment>
<comment type="caution">
    <text evidence="2">Similar to plant 1-aminocyclopropane-1-carboxylate synthases but lacks a number of residues which are necessary for activity.</text>
</comment>
<evidence type="ECO:0000250" key="1"/>
<evidence type="ECO:0000250" key="2">
    <source>
        <dbReference type="UniProtKB" id="Q96QU6"/>
    </source>
</evidence>
<evidence type="ECO:0000255" key="3"/>
<evidence type="ECO:0000256" key="4">
    <source>
        <dbReference type="SAM" id="MobiDB-lite"/>
    </source>
</evidence>
<evidence type="ECO:0000269" key="5">
    <source>
    </source>
</evidence>
<evidence type="ECO:0000303" key="6">
    <source>
    </source>
</evidence>
<evidence type="ECO:0000305" key="7"/>
<evidence type="ECO:0000312" key="8">
    <source>
        <dbReference type="EMBL" id="AAH39569.1"/>
    </source>
</evidence>
<name>1A1L1_MOUSE</name>
<dbReference type="EMBL" id="AL732472">
    <property type="status" value="NOT_ANNOTATED_CDS"/>
    <property type="molecule type" value="Genomic_DNA"/>
</dbReference>
<dbReference type="EMBL" id="BC039569">
    <property type="protein sequence ID" value="AAH39569.1"/>
    <property type="molecule type" value="mRNA"/>
</dbReference>
<dbReference type="CCDS" id="CCDS16457.1">
    <molecule id="A2AIG8-2"/>
</dbReference>
<dbReference type="CCDS" id="CCDS71105.1">
    <molecule id="A2AIG8-1"/>
</dbReference>
<dbReference type="RefSeq" id="NP_001277711.1">
    <molecule id="A2AIG8-1"/>
    <property type="nucleotide sequence ID" value="NM_001290782.1"/>
</dbReference>
<dbReference type="RefSeq" id="NP_899043.1">
    <molecule id="A2AIG8-2"/>
    <property type="nucleotide sequence ID" value="NM_183220.3"/>
</dbReference>
<dbReference type="RefSeq" id="XP_006499823.1">
    <molecule id="A2AIG8-1"/>
    <property type="nucleotide sequence ID" value="XM_006499760.4"/>
</dbReference>
<dbReference type="RefSeq" id="XP_006499824.1">
    <molecule id="A2AIG8-1"/>
    <property type="nucleotide sequence ID" value="XM_006499761.4"/>
</dbReference>
<dbReference type="RefSeq" id="XP_006499826.1">
    <molecule id="A2AIG8-2"/>
    <property type="nucleotide sequence ID" value="XM_006499763.3"/>
</dbReference>
<dbReference type="RefSeq" id="XP_006499827.1">
    <molecule id="A2AIG8-2"/>
    <property type="nucleotide sequence ID" value="XM_006499764.3"/>
</dbReference>
<dbReference type="RefSeq" id="XP_006499828.1">
    <molecule id="A2AIG8-2"/>
    <property type="nucleotide sequence ID" value="XM_006499765.3"/>
</dbReference>
<dbReference type="RefSeq" id="XP_006499829.1">
    <molecule id="A2AIG8-2"/>
    <property type="nucleotide sequence ID" value="XM_006499766.3"/>
</dbReference>
<dbReference type="RefSeq" id="XP_036018215.1">
    <molecule id="A2AIG8-1"/>
    <property type="nucleotide sequence ID" value="XM_036162322.1"/>
</dbReference>
<dbReference type="RefSeq" id="XP_036018216.1">
    <molecule id="A2AIG8-2"/>
    <property type="nucleotide sequence ID" value="XM_036162323.1"/>
</dbReference>
<dbReference type="SMR" id="A2AIG8"/>
<dbReference type="FunCoup" id="A2AIG8">
    <property type="interactions" value="11"/>
</dbReference>
<dbReference type="STRING" id="10090.ENSMUSP00000106877"/>
<dbReference type="iPTMnet" id="A2AIG8"/>
<dbReference type="PhosphoSitePlus" id="A2AIG8"/>
<dbReference type="PaxDb" id="10090-ENSMUSP00000036268"/>
<dbReference type="PeptideAtlas" id="A2AIG8"/>
<dbReference type="ProteomicsDB" id="285528">
    <molecule id="A2AIG8-1"/>
</dbReference>
<dbReference type="ProteomicsDB" id="285529">
    <molecule id="A2AIG8-2"/>
</dbReference>
<dbReference type="Antibodypedia" id="13193">
    <property type="antibodies" value="204 antibodies from 26 providers"/>
</dbReference>
<dbReference type="DNASU" id="329470"/>
<dbReference type="Ensembl" id="ENSMUST00000041593.15">
    <molecule id="A2AIG8-2"/>
    <property type="protein sequence ID" value="ENSMUSP00000036268.9"/>
    <property type="gene ID" value="ENSMUSG00000040272.15"/>
</dbReference>
<dbReference type="Ensembl" id="ENSMUST00000068513.11">
    <molecule id="A2AIG8-2"/>
    <property type="protein sequence ID" value="ENSMUSP00000065389.5"/>
    <property type="gene ID" value="ENSMUSG00000040272.15"/>
</dbReference>
<dbReference type="Ensembl" id="ENSMUST00000111246.8">
    <molecule id="A2AIG8-1"/>
    <property type="protein sequence ID" value="ENSMUSP00000106877.2"/>
    <property type="gene ID" value="ENSMUSG00000040272.15"/>
</dbReference>
<dbReference type="GeneID" id="329470"/>
<dbReference type="KEGG" id="mmu:329470"/>
<dbReference type="UCSC" id="uc008lgj.2">
    <molecule id="A2AIG8-1"/>
    <property type="organism name" value="mouse"/>
</dbReference>
<dbReference type="AGR" id="MGI:1919717"/>
<dbReference type="CTD" id="84680"/>
<dbReference type="MGI" id="MGI:1919717">
    <property type="gene designation" value="Accs"/>
</dbReference>
<dbReference type="VEuPathDB" id="HostDB:ENSMUSG00000040272"/>
<dbReference type="eggNOG" id="KOG0256">
    <property type="taxonomic scope" value="Eukaryota"/>
</dbReference>
<dbReference type="GeneTree" id="ENSGT00940000161101"/>
<dbReference type="HOGENOM" id="CLU_017584_1_3_1"/>
<dbReference type="InParanoid" id="A2AIG8"/>
<dbReference type="OMA" id="PYYGTFV"/>
<dbReference type="OrthoDB" id="7042322at2759"/>
<dbReference type="PhylomeDB" id="A2AIG8"/>
<dbReference type="TreeFam" id="TF354218"/>
<dbReference type="BioGRID-ORCS" id="329470">
    <property type="hits" value="1 hit in 79 CRISPR screens"/>
</dbReference>
<dbReference type="PRO" id="PR:A2AIG8"/>
<dbReference type="Proteomes" id="UP000000589">
    <property type="component" value="Chromosome 2"/>
</dbReference>
<dbReference type="RNAct" id="A2AIG8">
    <property type="molecule type" value="protein"/>
</dbReference>
<dbReference type="Bgee" id="ENSMUSG00000040272">
    <property type="expression patterns" value="Expressed in metanephric renal vesicle and 196 other cell types or tissues"/>
</dbReference>
<dbReference type="ExpressionAtlas" id="A2AIG8">
    <property type="expression patterns" value="baseline and differential"/>
</dbReference>
<dbReference type="GO" id="GO:0042802">
    <property type="term" value="F:identical protein binding"/>
    <property type="evidence" value="ECO:0007669"/>
    <property type="project" value="Ensembl"/>
</dbReference>
<dbReference type="GO" id="GO:0030170">
    <property type="term" value="F:pyridoxal phosphate binding"/>
    <property type="evidence" value="ECO:0007669"/>
    <property type="project" value="InterPro"/>
</dbReference>
<dbReference type="GO" id="GO:0009058">
    <property type="term" value="P:biosynthetic process"/>
    <property type="evidence" value="ECO:0007669"/>
    <property type="project" value="InterPro"/>
</dbReference>
<dbReference type="CDD" id="cd00609">
    <property type="entry name" value="AAT_like"/>
    <property type="match status" value="1"/>
</dbReference>
<dbReference type="FunFam" id="3.40.640.10:FF:000102">
    <property type="entry name" value="1-aminocyclopropane-1-carboxylate synthase homolog (inactive)"/>
    <property type="match status" value="1"/>
</dbReference>
<dbReference type="Gene3D" id="3.90.1150.10">
    <property type="entry name" value="Aspartate Aminotransferase, domain 1"/>
    <property type="match status" value="1"/>
</dbReference>
<dbReference type="Gene3D" id="3.40.640.10">
    <property type="entry name" value="Type I PLP-dependent aspartate aminotransferase-like (Major domain)"/>
    <property type="match status" value="1"/>
</dbReference>
<dbReference type="InterPro" id="IPR004839">
    <property type="entry name" value="Aminotransferase_I/II_large"/>
</dbReference>
<dbReference type="InterPro" id="IPR050478">
    <property type="entry name" value="Ethylene_sulfur-biosynth"/>
</dbReference>
<dbReference type="InterPro" id="IPR015424">
    <property type="entry name" value="PyrdxlP-dep_Trfase"/>
</dbReference>
<dbReference type="InterPro" id="IPR015421">
    <property type="entry name" value="PyrdxlP-dep_Trfase_major"/>
</dbReference>
<dbReference type="InterPro" id="IPR015422">
    <property type="entry name" value="PyrdxlP-dep_Trfase_small"/>
</dbReference>
<dbReference type="PANTHER" id="PTHR43795:SF17">
    <property type="entry name" value="1-AMINOCYCLOPROPANE-1-CARBOXYLATE SYNTHASE-LIKE PROTEIN 1"/>
    <property type="match status" value="1"/>
</dbReference>
<dbReference type="PANTHER" id="PTHR43795">
    <property type="entry name" value="BIFUNCTIONAL ASPARTATE AMINOTRANSFERASE AND GLUTAMATE/ASPARTATE-PREPHENATE AMINOTRANSFERASE-RELATED"/>
    <property type="match status" value="1"/>
</dbReference>
<dbReference type="Pfam" id="PF00155">
    <property type="entry name" value="Aminotran_1_2"/>
    <property type="match status" value="1"/>
</dbReference>
<dbReference type="PRINTS" id="PR00753">
    <property type="entry name" value="ACCSYNTHASE"/>
</dbReference>
<dbReference type="SUPFAM" id="SSF53383">
    <property type="entry name" value="PLP-dependent transferases"/>
    <property type="match status" value="1"/>
</dbReference>
<reference key="1">
    <citation type="journal article" date="2009" name="PLoS Biol.">
        <title>Lineage-specific biology revealed by a finished genome assembly of the mouse.</title>
        <authorList>
            <person name="Church D.M."/>
            <person name="Goodstadt L."/>
            <person name="Hillier L.W."/>
            <person name="Zody M.C."/>
            <person name="Goldstein S."/>
            <person name="She X."/>
            <person name="Bult C.J."/>
            <person name="Agarwala R."/>
            <person name="Cherry J.L."/>
            <person name="DiCuccio M."/>
            <person name="Hlavina W."/>
            <person name="Kapustin Y."/>
            <person name="Meric P."/>
            <person name="Maglott D."/>
            <person name="Birtle Z."/>
            <person name="Marques A.C."/>
            <person name="Graves T."/>
            <person name="Zhou S."/>
            <person name="Teague B."/>
            <person name="Potamousis K."/>
            <person name="Churas C."/>
            <person name="Place M."/>
            <person name="Herschleb J."/>
            <person name="Runnheim R."/>
            <person name="Forrest D."/>
            <person name="Amos-Landgraf J."/>
            <person name="Schwartz D.C."/>
            <person name="Cheng Z."/>
            <person name="Lindblad-Toh K."/>
            <person name="Eichler E.E."/>
            <person name="Ponting C.P."/>
        </authorList>
    </citation>
    <scope>NUCLEOTIDE SEQUENCE [LARGE SCALE GENOMIC DNA]</scope>
    <source>
        <strain>C57BL/6J</strain>
    </source>
</reference>
<reference evidence="7 8" key="2">
    <citation type="journal article" date="2004" name="Genome Res.">
        <title>The status, quality, and expansion of the NIH full-length cDNA project: the Mammalian Gene Collection (MGC).</title>
        <authorList>
            <consortium name="The MGC Project Team"/>
        </authorList>
    </citation>
    <scope>NUCLEOTIDE SEQUENCE [LARGE SCALE MRNA] (ISOFORM 2)</scope>
    <source>
        <strain evidence="8">C57BL/6J</strain>
        <tissue evidence="8">Mammary gland</tissue>
    </source>
</reference>
<accession>A2AIG8</accession>
<accession>Q8CHS6</accession>
<organism>
    <name type="scientific">Mus musculus</name>
    <name type="common">Mouse</name>
    <dbReference type="NCBI Taxonomy" id="10090"/>
    <lineage>
        <taxon>Eukaryota</taxon>
        <taxon>Metazoa</taxon>
        <taxon>Chordata</taxon>
        <taxon>Craniata</taxon>
        <taxon>Vertebrata</taxon>
        <taxon>Euteleostomi</taxon>
        <taxon>Mammalia</taxon>
        <taxon>Eutheria</taxon>
        <taxon>Euarchontoglires</taxon>
        <taxon>Glires</taxon>
        <taxon>Rodentia</taxon>
        <taxon>Myomorpha</taxon>
        <taxon>Muroidea</taxon>
        <taxon>Muridae</taxon>
        <taxon>Murinae</taxon>
        <taxon>Mus</taxon>
        <taxon>Mus</taxon>
    </lineage>
</organism>
<protein>
    <recommendedName>
        <fullName>1-aminocyclopropane-1-carboxylate synthase-like protein 1</fullName>
        <shortName>ACC synthase-like protein 1</shortName>
    </recommendedName>
</protein>